<protein>
    <recommendedName>
        <fullName>Putative uncharacterized protein DDB_G0284229</fullName>
    </recommendedName>
</protein>
<organism>
    <name type="scientific">Dictyostelium discoideum</name>
    <name type="common">Social amoeba</name>
    <dbReference type="NCBI Taxonomy" id="44689"/>
    <lineage>
        <taxon>Eukaryota</taxon>
        <taxon>Amoebozoa</taxon>
        <taxon>Evosea</taxon>
        <taxon>Eumycetozoa</taxon>
        <taxon>Dictyostelia</taxon>
        <taxon>Dictyosteliales</taxon>
        <taxon>Dictyosteliaceae</taxon>
        <taxon>Dictyostelium</taxon>
    </lineage>
</organism>
<sequence length="73" mass="8809">MATYCLSPLMHLDHFFNKILLMTTTTTTHRKKYINFQEQKLKKQESIGQSQPDVQEQLQHQQLQHHQKLYKIN</sequence>
<dbReference type="EMBL" id="AAFI02000064">
    <property type="protein sequence ID" value="EAL65303.1"/>
    <property type="molecule type" value="Genomic_DNA"/>
</dbReference>
<dbReference type="RefSeq" id="XP_638660.1">
    <property type="nucleotide sequence ID" value="XM_633568.1"/>
</dbReference>
<dbReference type="SMR" id="Q54PY5"/>
<dbReference type="PaxDb" id="44689-DDB0185909"/>
<dbReference type="EnsemblProtists" id="EAL65303">
    <property type="protein sequence ID" value="EAL65303"/>
    <property type="gene ID" value="DDB_G0284229"/>
</dbReference>
<dbReference type="GeneID" id="8624489"/>
<dbReference type="KEGG" id="ddi:DDB_G0284229"/>
<dbReference type="dictyBase" id="DDB_G0284229"/>
<dbReference type="VEuPathDB" id="AmoebaDB:DDB_G0284229"/>
<dbReference type="HOGENOM" id="CLU_2710019_0_0_1"/>
<dbReference type="InParanoid" id="Q54PY5"/>
<dbReference type="PRO" id="PR:Q54PY5"/>
<dbReference type="Proteomes" id="UP000002195">
    <property type="component" value="Chromosome 4"/>
</dbReference>
<gene>
    <name type="ORF">DDB_G0284229</name>
</gene>
<keyword id="KW-1185">Reference proteome</keyword>
<reference key="1">
    <citation type="journal article" date="2005" name="Nature">
        <title>The genome of the social amoeba Dictyostelium discoideum.</title>
        <authorList>
            <person name="Eichinger L."/>
            <person name="Pachebat J.A."/>
            <person name="Gloeckner G."/>
            <person name="Rajandream M.A."/>
            <person name="Sucgang R."/>
            <person name="Berriman M."/>
            <person name="Song J."/>
            <person name="Olsen R."/>
            <person name="Szafranski K."/>
            <person name="Xu Q."/>
            <person name="Tunggal B."/>
            <person name="Kummerfeld S."/>
            <person name="Madera M."/>
            <person name="Konfortov B.A."/>
            <person name="Rivero F."/>
            <person name="Bankier A.T."/>
            <person name="Lehmann R."/>
            <person name="Hamlin N."/>
            <person name="Davies R."/>
            <person name="Gaudet P."/>
            <person name="Fey P."/>
            <person name="Pilcher K."/>
            <person name="Chen G."/>
            <person name="Saunders D."/>
            <person name="Sodergren E.J."/>
            <person name="Davis P."/>
            <person name="Kerhornou A."/>
            <person name="Nie X."/>
            <person name="Hall N."/>
            <person name="Anjard C."/>
            <person name="Hemphill L."/>
            <person name="Bason N."/>
            <person name="Farbrother P."/>
            <person name="Desany B."/>
            <person name="Just E."/>
            <person name="Morio T."/>
            <person name="Rost R."/>
            <person name="Churcher C.M."/>
            <person name="Cooper J."/>
            <person name="Haydock S."/>
            <person name="van Driessche N."/>
            <person name="Cronin A."/>
            <person name="Goodhead I."/>
            <person name="Muzny D.M."/>
            <person name="Mourier T."/>
            <person name="Pain A."/>
            <person name="Lu M."/>
            <person name="Harper D."/>
            <person name="Lindsay R."/>
            <person name="Hauser H."/>
            <person name="James K.D."/>
            <person name="Quiles M."/>
            <person name="Madan Babu M."/>
            <person name="Saito T."/>
            <person name="Buchrieser C."/>
            <person name="Wardroper A."/>
            <person name="Felder M."/>
            <person name="Thangavelu M."/>
            <person name="Johnson D."/>
            <person name="Knights A."/>
            <person name="Loulseged H."/>
            <person name="Mungall K.L."/>
            <person name="Oliver K."/>
            <person name="Price C."/>
            <person name="Quail M.A."/>
            <person name="Urushihara H."/>
            <person name="Hernandez J."/>
            <person name="Rabbinowitsch E."/>
            <person name="Steffen D."/>
            <person name="Sanders M."/>
            <person name="Ma J."/>
            <person name="Kohara Y."/>
            <person name="Sharp S."/>
            <person name="Simmonds M.N."/>
            <person name="Spiegler S."/>
            <person name="Tivey A."/>
            <person name="Sugano S."/>
            <person name="White B."/>
            <person name="Walker D."/>
            <person name="Woodward J.R."/>
            <person name="Winckler T."/>
            <person name="Tanaka Y."/>
            <person name="Shaulsky G."/>
            <person name="Schleicher M."/>
            <person name="Weinstock G.M."/>
            <person name="Rosenthal A."/>
            <person name="Cox E.C."/>
            <person name="Chisholm R.L."/>
            <person name="Gibbs R.A."/>
            <person name="Loomis W.F."/>
            <person name="Platzer M."/>
            <person name="Kay R.R."/>
            <person name="Williams J.G."/>
            <person name="Dear P.H."/>
            <person name="Noegel A.A."/>
            <person name="Barrell B.G."/>
            <person name="Kuspa A."/>
        </authorList>
    </citation>
    <scope>NUCLEOTIDE SEQUENCE [LARGE SCALE GENOMIC DNA]</scope>
    <source>
        <strain>AX4</strain>
    </source>
</reference>
<feature type="chain" id="PRO_0000350903" description="Putative uncharacterized protein DDB_G0284229">
    <location>
        <begin position="1"/>
        <end position="73"/>
    </location>
</feature>
<proteinExistence type="predicted"/>
<accession>Q54PY5</accession>
<name>Y8590_DICDI</name>